<name>YYZB_BACSU</name>
<organism>
    <name type="scientific">Bacillus subtilis (strain 168)</name>
    <dbReference type="NCBI Taxonomy" id="224308"/>
    <lineage>
        <taxon>Bacteria</taxon>
        <taxon>Bacillati</taxon>
        <taxon>Bacillota</taxon>
        <taxon>Bacilli</taxon>
        <taxon>Bacillales</taxon>
        <taxon>Bacillaceae</taxon>
        <taxon>Bacillus</taxon>
    </lineage>
</organism>
<proteinExistence type="predicted"/>
<accession>O32296</accession>
<sequence length="67" mass="7909">MHAPLSLLKQMLKEHQIDTEKAVTFEEYIAMRLKLQELMGKFASIGEWDLYQKAADLMMHIGIQWMK</sequence>
<feature type="chain" id="PRO_0000050077" description="Uncharacterized protein YyzB">
    <location>
        <begin position="1"/>
        <end position="67"/>
    </location>
</feature>
<protein>
    <recommendedName>
        <fullName>Uncharacterized protein YyzB</fullName>
    </recommendedName>
</protein>
<dbReference type="EMBL" id="AL009126">
    <property type="protein sequence ID" value="CAB16083.1"/>
    <property type="molecule type" value="Genomic_DNA"/>
</dbReference>
<dbReference type="PIR" id="C70092">
    <property type="entry name" value="C70092"/>
</dbReference>
<dbReference type="RefSeq" id="NP_391926.1">
    <property type="nucleotide sequence ID" value="NC_000964.3"/>
</dbReference>
<dbReference type="RefSeq" id="WP_003244312.1">
    <property type="nucleotide sequence ID" value="NZ_OZ025638.1"/>
</dbReference>
<dbReference type="SMR" id="O32296"/>
<dbReference type="FunCoup" id="O32296">
    <property type="interactions" value="85"/>
</dbReference>
<dbReference type="STRING" id="224308.BSU40460"/>
<dbReference type="PaxDb" id="224308-BSU40460"/>
<dbReference type="EnsemblBacteria" id="CAB16083">
    <property type="protein sequence ID" value="CAB16083"/>
    <property type="gene ID" value="BSU_40460"/>
</dbReference>
<dbReference type="GeneID" id="937821"/>
<dbReference type="KEGG" id="bsu:BSU40460"/>
<dbReference type="PATRIC" id="fig|224308.179.peg.4380"/>
<dbReference type="InParanoid" id="O32296"/>
<dbReference type="OrthoDB" id="2920248at2"/>
<dbReference type="BioCyc" id="BSUB:BSU40460-MONOMER"/>
<dbReference type="Proteomes" id="UP000001570">
    <property type="component" value="Chromosome"/>
</dbReference>
<keyword id="KW-1185">Reference proteome</keyword>
<gene>
    <name type="primary">yyzB</name>
    <name type="ordered locus">BSU40460</name>
</gene>
<reference key="1">
    <citation type="journal article" date="1997" name="Nature">
        <title>The complete genome sequence of the Gram-positive bacterium Bacillus subtilis.</title>
        <authorList>
            <person name="Kunst F."/>
            <person name="Ogasawara N."/>
            <person name="Moszer I."/>
            <person name="Albertini A.M."/>
            <person name="Alloni G."/>
            <person name="Azevedo V."/>
            <person name="Bertero M.G."/>
            <person name="Bessieres P."/>
            <person name="Bolotin A."/>
            <person name="Borchert S."/>
            <person name="Borriss R."/>
            <person name="Boursier L."/>
            <person name="Brans A."/>
            <person name="Braun M."/>
            <person name="Brignell S.C."/>
            <person name="Bron S."/>
            <person name="Brouillet S."/>
            <person name="Bruschi C.V."/>
            <person name="Caldwell B."/>
            <person name="Capuano V."/>
            <person name="Carter N.M."/>
            <person name="Choi S.-K."/>
            <person name="Codani J.-J."/>
            <person name="Connerton I.F."/>
            <person name="Cummings N.J."/>
            <person name="Daniel R.A."/>
            <person name="Denizot F."/>
            <person name="Devine K.M."/>
            <person name="Duesterhoeft A."/>
            <person name="Ehrlich S.D."/>
            <person name="Emmerson P.T."/>
            <person name="Entian K.-D."/>
            <person name="Errington J."/>
            <person name="Fabret C."/>
            <person name="Ferrari E."/>
            <person name="Foulger D."/>
            <person name="Fritz C."/>
            <person name="Fujita M."/>
            <person name="Fujita Y."/>
            <person name="Fuma S."/>
            <person name="Galizzi A."/>
            <person name="Galleron N."/>
            <person name="Ghim S.-Y."/>
            <person name="Glaser P."/>
            <person name="Goffeau A."/>
            <person name="Golightly E.J."/>
            <person name="Grandi G."/>
            <person name="Guiseppi G."/>
            <person name="Guy B.J."/>
            <person name="Haga K."/>
            <person name="Haiech J."/>
            <person name="Harwood C.R."/>
            <person name="Henaut A."/>
            <person name="Hilbert H."/>
            <person name="Holsappel S."/>
            <person name="Hosono S."/>
            <person name="Hullo M.-F."/>
            <person name="Itaya M."/>
            <person name="Jones L.-M."/>
            <person name="Joris B."/>
            <person name="Karamata D."/>
            <person name="Kasahara Y."/>
            <person name="Klaerr-Blanchard M."/>
            <person name="Klein C."/>
            <person name="Kobayashi Y."/>
            <person name="Koetter P."/>
            <person name="Koningstein G."/>
            <person name="Krogh S."/>
            <person name="Kumano M."/>
            <person name="Kurita K."/>
            <person name="Lapidus A."/>
            <person name="Lardinois S."/>
            <person name="Lauber J."/>
            <person name="Lazarevic V."/>
            <person name="Lee S.-M."/>
            <person name="Levine A."/>
            <person name="Liu H."/>
            <person name="Masuda S."/>
            <person name="Mauel C."/>
            <person name="Medigue C."/>
            <person name="Medina N."/>
            <person name="Mellado R.P."/>
            <person name="Mizuno M."/>
            <person name="Moestl D."/>
            <person name="Nakai S."/>
            <person name="Noback M."/>
            <person name="Noone D."/>
            <person name="O'Reilly M."/>
            <person name="Ogawa K."/>
            <person name="Ogiwara A."/>
            <person name="Oudega B."/>
            <person name="Park S.-H."/>
            <person name="Parro V."/>
            <person name="Pohl T.M."/>
            <person name="Portetelle D."/>
            <person name="Porwollik S."/>
            <person name="Prescott A.M."/>
            <person name="Presecan E."/>
            <person name="Pujic P."/>
            <person name="Purnelle B."/>
            <person name="Rapoport G."/>
            <person name="Rey M."/>
            <person name="Reynolds S."/>
            <person name="Rieger M."/>
            <person name="Rivolta C."/>
            <person name="Rocha E."/>
            <person name="Roche B."/>
            <person name="Rose M."/>
            <person name="Sadaie Y."/>
            <person name="Sato T."/>
            <person name="Scanlan E."/>
            <person name="Schleich S."/>
            <person name="Schroeter R."/>
            <person name="Scoffone F."/>
            <person name="Sekiguchi J."/>
            <person name="Sekowska A."/>
            <person name="Seror S.J."/>
            <person name="Serror P."/>
            <person name="Shin B.-S."/>
            <person name="Soldo B."/>
            <person name="Sorokin A."/>
            <person name="Tacconi E."/>
            <person name="Takagi T."/>
            <person name="Takahashi H."/>
            <person name="Takemaru K."/>
            <person name="Takeuchi M."/>
            <person name="Tamakoshi A."/>
            <person name="Tanaka T."/>
            <person name="Terpstra P."/>
            <person name="Tognoni A."/>
            <person name="Tosato V."/>
            <person name="Uchiyama S."/>
            <person name="Vandenbol M."/>
            <person name="Vannier F."/>
            <person name="Vassarotti A."/>
            <person name="Viari A."/>
            <person name="Wambutt R."/>
            <person name="Wedler E."/>
            <person name="Wedler H."/>
            <person name="Weitzenegger T."/>
            <person name="Winters P."/>
            <person name="Wipat A."/>
            <person name="Yamamoto H."/>
            <person name="Yamane K."/>
            <person name="Yasumoto K."/>
            <person name="Yata K."/>
            <person name="Yoshida K."/>
            <person name="Yoshikawa H.-F."/>
            <person name="Zumstein E."/>
            <person name="Yoshikawa H."/>
            <person name="Danchin A."/>
        </authorList>
    </citation>
    <scope>NUCLEOTIDE SEQUENCE [LARGE SCALE GENOMIC DNA]</scope>
    <source>
        <strain>168</strain>
    </source>
</reference>